<organism>
    <name type="scientific">Pichia angusta</name>
    <name type="common">Yeast</name>
    <name type="synonym">Hansenula polymorpha</name>
    <dbReference type="NCBI Taxonomy" id="870730"/>
    <lineage>
        <taxon>Eukaryota</taxon>
        <taxon>Fungi</taxon>
        <taxon>Dikarya</taxon>
        <taxon>Ascomycota</taxon>
        <taxon>Saccharomycotina</taxon>
        <taxon>Pichiomycetes</taxon>
        <taxon>Pichiales</taxon>
        <taxon>Pichiaceae</taxon>
        <taxon>Ogataea</taxon>
    </lineage>
</organism>
<dbReference type="EMBL" id="AJ617305">
    <property type="protein sequence ID" value="CAE84419.1"/>
    <property type="molecule type" value="Genomic_DNA"/>
</dbReference>
<dbReference type="SMR" id="Q707Y6"/>
<dbReference type="GO" id="GO:0005634">
    <property type="term" value="C:nucleus"/>
    <property type="evidence" value="ECO:0007669"/>
    <property type="project" value="UniProtKB-SubCell"/>
</dbReference>
<dbReference type="GO" id="GO:0003677">
    <property type="term" value="F:DNA binding"/>
    <property type="evidence" value="ECO:0007669"/>
    <property type="project" value="UniProtKB-KW"/>
</dbReference>
<dbReference type="GO" id="GO:0000981">
    <property type="term" value="F:DNA-binding transcription factor activity, RNA polymerase II-specific"/>
    <property type="evidence" value="ECO:0007669"/>
    <property type="project" value="InterPro"/>
</dbReference>
<dbReference type="CDD" id="cd00086">
    <property type="entry name" value="homeodomain"/>
    <property type="match status" value="1"/>
</dbReference>
<dbReference type="Gene3D" id="1.10.10.60">
    <property type="entry name" value="Homeodomain-like"/>
    <property type="match status" value="1"/>
</dbReference>
<dbReference type="InterPro" id="IPR001356">
    <property type="entry name" value="HD"/>
</dbReference>
<dbReference type="InterPro" id="IPR050762">
    <property type="entry name" value="HD-ZIP_Homeobox_LZ_Class_II"/>
</dbReference>
<dbReference type="InterPro" id="IPR017970">
    <property type="entry name" value="Homeobox_CS"/>
</dbReference>
<dbReference type="InterPro" id="IPR009057">
    <property type="entry name" value="Homeodomain-like_sf"/>
</dbReference>
<dbReference type="PANTHER" id="PTHR45714">
    <property type="entry name" value="HOMEOBOX-LEUCINE ZIPPER PROTEIN HAT14"/>
    <property type="match status" value="1"/>
</dbReference>
<dbReference type="PANTHER" id="PTHR45714:SF34">
    <property type="entry name" value="HOMEOBOX-LEUCINE ZIPPER PROTEIN HAT9"/>
    <property type="match status" value="1"/>
</dbReference>
<dbReference type="Pfam" id="PF00046">
    <property type="entry name" value="Homeodomain"/>
    <property type="match status" value="1"/>
</dbReference>
<dbReference type="SMART" id="SM00389">
    <property type="entry name" value="HOX"/>
    <property type="match status" value="1"/>
</dbReference>
<dbReference type="SUPFAM" id="SSF46689">
    <property type="entry name" value="Homeodomain-like"/>
    <property type="match status" value="1"/>
</dbReference>
<dbReference type="PROSITE" id="PS00027">
    <property type="entry name" value="HOMEOBOX_1"/>
    <property type="match status" value="1"/>
</dbReference>
<dbReference type="PROSITE" id="PS50071">
    <property type="entry name" value="HOMEOBOX_2"/>
    <property type="match status" value="1"/>
</dbReference>
<evidence type="ECO:0000255" key="1">
    <source>
        <dbReference type="PROSITE-ProRule" id="PRU00108"/>
    </source>
</evidence>
<evidence type="ECO:0000305" key="2"/>
<accession>Q707Y6</accession>
<protein>
    <recommendedName>
        <fullName>Mating-type protein A1</fullName>
    </recommendedName>
    <alternativeName>
        <fullName>MATa1 transcription factor</fullName>
    </alternativeName>
</protein>
<reference key="1">
    <citation type="journal article" date="2004" name="Proc. Natl. Acad. Sci. U.S.A.">
        <title>Evolution of the MAT locus and its Ho endonuclease in yeast species.</title>
        <authorList>
            <person name="Butler G."/>
            <person name="Kenny C."/>
            <person name="Fagan A."/>
            <person name="Kurischko C."/>
            <person name="Gaillardin C."/>
            <person name="Wolfe K.H."/>
        </authorList>
    </citation>
    <scope>NUCLEOTIDE SEQUENCE [GENOMIC DNA]</scope>
    <source>
        <strain>ATCC 34438 / CBS 4732 / DSM 70277 / JCM 3621 / NBRC 1476 / NRRL Y-5445</strain>
    </source>
</reference>
<name>MATA1_PICAN</name>
<keyword id="KW-0238">DNA-binding</keyword>
<keyword id="KW-0371">Homeobox</keyword>
<keyword id="KW-0539">Nucleus</keyword>
<keyword id="KW-0804">Transcription</keyword>
<keyword id="KW-0805">Transcription regulation</keyword>
<proteinExistence type="inferred from homology"/>
<sequence>MQFTILNEPSLDSQRREGDLASENYVFGDIRKEGVRILEDSLRSERNALLAIGAGGAADRVKQHYRKLLDDWEAAIMEIRSNDKYESLCCGFAIEKAEVETEMRNTEELDVYKECLVSECFDKKKRRHIPESSKELLEKAFKVKRFPNSKERERIARECGISPLQVRVWFTNKRARSKSRA</sequence>
<feature type="chain" id="PRO_0000049181" description="Mating-type protein A1">
    <location>
        <begin position="1"/>
        <end position="181"/>
    </location>
</feature>
<feature type="DNA-binding region" description="Homeobox" evidence="1">
    <location>
        <begin position="122"/>
        <end position="181"/>
    </location>
</feature>
<gene>
    <name type="primary">MATA1</name>
</gene>
<comment type="function">
    <text>Mating type proteins are sequence specific DNA-binding proteins that act as master switches in yeast differentiation by controlling gene expression in a cell type-specific fashion.</text>
</comment>
<comment type="subcellular location">
    <subcellularLocation>
        <location evidence="1">Nucleus</location>
    </subcellularLocation>
</comment>
<comment type="miscellaneous">
    <text>In P.angusta, all mating-type proteins (MATA1, MATALPHA1 and MATALPHA2) are encoded on one idiomorph, consistent with the fact that P.angusta is a homothallic haploid in which any strain can mate with any other strain.</text>
</comment>
<comment type="similarity">
    <text evidence="2">Belongs to the MATA1 family.</text>
</comment>